<reference key="1">
    <citation type="submission" date="2003-11" db="EMBL/GenBank/DDBJ databases">
        <title>The cloning of osGAI gene.</title>
        <authorList>
            <person name="Zhu Z."/>
            <person name="Sun C."/>
        </authorList>
    </citation>
    <scope>NUCLEOTIDE SEQUENCE [MRNA]</scope>
</reference>
<reference key="2">
    <citation type="journal article" date="2002" name="Nature">
        <title>The genome sequence and structure of rice chromosome 1.</title>
        <authorList>
            <person name="Sasaki T."/>
            <person name="Matsumoto T."/>
            <person name="Yamamoto K."/>
            <person name="Sakata K."/>
            <person name="Baba T."/>
            <person name="Katayose Y."/>
            <person name="Wu J."/>
            <person name="Niimura Y."/>
            <person name="Cheng Z."/>
            <person name="Nagamura Y."/>
            <person name="Antonio B.A."/>
            <person name="Kanamori H."/>
            <person name="Hosokawa S."/>
            <person name="Masukawa M."/>
            <person name="Arikawa K."/>
            <person name="Chiden Y."/>
            <person name="Hayashi M."/>
            <person name="Okamoto M."/>
            <person name="Ando T."/>
            <person name="Aoki H."/>
            <person name="Arita K."/>
            <person name="Hamada M."/>
            <person name="Harada C."/>
            <person name="Hijishita S."/>
            <person name="Honda M."/>
            <person name="Ichikawa Y."/>
            <person name="Idonuma A."/>
            <person name="Iijima M."/>
            <person name="Ikeda M."/>
            <person name="Ikeno M."/>
            <person name="Ito S."/>
            <person name="Ito T."/>
            <person name="Ito Y."/>
            <person name="Ito Y."/>
            <person name="Iwabuchi A."/>
            <person name="Kamiya K."/>
            <person name="Karasawa W."/>
            <person name="Katagiri S."/>
            <person name="Kikuta A."/>
            <person name="Kobayashi N."/>
            <person name="Kono I."/>
            <person name="Machita K."/>
            <person name="Maehara T."/>
            <person name="Mizuno H."/>
            <person name="Mizubayashi T."/>
            <person name="Mukai Y."/>
            <person name="Nagasaki H."/>
            <person name="Nakashima M."/>
            <person name="Nakama Y."/>
            <person name="Nakamichi Y."/>
            <person name="Nakamura M."/>
            <person name="Namiki N."/>
            <person name="Negishi M."/>
            <person name="Ohta I."/>
            <person name="Ono N."/>
            <person name="Saji S."/>
            <person name="Sakai K."/>
            <person name="Shibata M."/>
            <person name="Shimokawa T."/>
            <person name="Shomura A."/>
            <person name="Song J."/>
            <person name="Takazaki Y."/>
            <person name="Terasawa K."/>
            <person name="Tsuji K."/>
            <person name="Waki K."/>
            <person name="Yamagata H."/>
            <person name="Yamane H."/>
            <person name="Yoshiki S."/>
            <person name="Yoshihara R."/>
            <person name="Yukawa K."/>
            <person name="Zhong H."/>
            <person name="Iwama H."/>
            <person name="Endo T."/>
            <person name="Ito H."/>
            <person name="Hahn J.H."/>
            <person name="Kim H.-I."/>
            <person name="Eun M.-Y."/>
            <person name="Yano M."/>
            <person name="Jiang J."/>
            <person name="Gojobori T."/>
        </authorList>
    </citation>
    <scope>NUCLEOTIDE SEQUENCE [LARGE SCALE GENOMIC DNA]</scope>
    <source>
        <strain>cv. Nipponbare</strain>
    </source>
</reference>
<reference key="3">
    <citation type="journal article" date="2005" name="Nature">
        <title>The map-based sequence of the rice genome.</title>
        <authorList>
            <consortium name="International rice genome sequencing project (IRGSP)"/>
        </authorList>
    </citation>
    <scope>NUCLEOTIDE SEQUENCE [LARGE SCALE GENOMIC DNA]</scope>
    <source>
        <strain>cv. Nipponbare</strain>
    </source>
</reference>
<reference key="4">
    <citation type="journal article" date="2008" name="Nucleic Acids Res.">
        <title>The rice annotation project database (RAP-DB): 2008 update.</title>
        <authorList>
            <consortium name="The rice annotation project (RAP)"/>
        </authorList>
    </citation>
    <scope>GENOME REANNOTATION</scope>
    <source>
        <strain>cv. Nipponbare</strain>
    </source>
</reference>
<reference key="5">
    <citation type="journal article" date="2013" name="Rice">
        <title>Improvement of the Oryza sativa Nipponbare reference genome using next generation sequence and optical map data.</title>
        <authorList>
            <person name="Kawahara Y."/>
            <person name="de la Bastide M."/>
            <person name="Hamilton J.P."/>
            <person name="Kanamori H."/>
            <person name="McCombie W.R."/>
            <person name="Ouyang S."/>
            <person name="Schwartz D.C."/>
            <person name="Tanaka T."/>
            <person name="Wu J."/>
            <person name="Zhou S."/>
            <person name="Childs K.L."/>
            <person name="Davidson R.M."/>
            <person name="Lin H."/>
            <person name="Quesada-Ocampo L."/>
            <person name="Vaillancourt B."/>
            <person name="Sakai H."/>
            <person name="Lee S.S."/>
            <person name="Kim J."/>
            <person name="Numa H."/>
            <person name="Itoh T."/>
            <person name="Buell C.R."/>
            <person name="Matsumoto T."/>
        </authorList>
    </citation>
    <scope>GENOME REANNOTATION</scope>
    <source>
        <strain>cv. Nipponbare</strain>
    </source>
</reference>
<reference key="6">
    <citation type="submission" date="2006-10" db="EMBL/GenBank/DDBJ databases">
        <title>Oryza sativa full length cDNA.</title>
        <authorList>
            <consortium name="The rice full-length cDNA consortium"/>
        </authorList>
    </citation>
    <scope>NUCLEOTIDE SEQUENCE [LARGE SCALE MRNA]</scope>
    <source>
        <strain>cv. Nipponbare</strain>
    </source>
</reference>
<reference key="7">
    <citation type="journal article" date="2005" name="Plant J.">
        <title>Overexpression of a GRAS protein lacking the DELLA domain confers altered gibberellin responses in rice.</title>
        <authorList>
            <person name="Itoh H."/>
            <person name="Shimada A."/>
            <person name="Ueguchi-Tanaka M."/>
            <person name="Kamiya N."/>
            <person name="Hasegawa Y."/>
            <person name="Ashikari M."/>
            <person name="Matsuoka M."/>
        </authorList>
    </citation>
    <scope>FUNCTION</scope>
    <scope>TISSUE SPECIFICITY</scope>
    <scope>INDUCTION BY GIBBERELLIN</scope>
</reference>
<dbReference type="EMBL" id="AY464568">
    <property type="protein sequence ID" value="AAR31213.1"/>
    <property type="status" value="ALT_INIT"/>
    <property type="molecule type" value="mRNA"/>
</dbReference>
<dbReference type="EMBL" id="AP002910">
    <property type="protein sequence ID" value="BAB40172.1"/>
    <property type="status" value="ALT_INIT"/>
    <property type="molecule type" value="Genomic_DNA"/>
</dbReference>
<dbReference type="EMBL" id="AP003234">
    <property type="protein sequence ID" value="BAC05533.1"/>
    <property type="status" value="ALT_INIT"/>
    <property type="molecule type" value="Genomic_DNA"/>
</dbReference>
<dbReference type="EMBL" id="AP008207">
    <property type="protein sequence ID" value="BAF05619.1"/>
    <property type="status" value="ALT_INIT"/>
    <property type="molecule type" value="Genomic_DNA"/>
</dbReference>
<dbReference type="EMBL" id="AP014957">
    <property type="protein sequence ID" value="BAS73406.1"/>
    <property type="molecule type" value="Genomic_DNA"/>
</dbReference>
<dbReference type="EMBL" id="AK242412">
    <property type="protein sequence ID" value="BAH01283.1"/>
    <property type="molecule type" value="mRNA"/>
</dbReference>
<dbReference type="RefSeq" id="XP_015624056.1">
    <property type="nucleotide sequence ID" value="XM_015768570.1"/>
</dbReference>
<dbReference type="SMR" id="B7F9I5"/>
<dbReference type="FunCoup" id="B7F9I5">
    <property type="interactions" value="27"/>
</dbReference>
<dbReference type="STRING" id="39947.B7F9I5"/>
<dbReference type="PaxDb" id="39947-B7F9I5"/>
<dbReference type="EnsemblPlants" id="Os01t0646300-01">
    <property type="protein sequence ID" value="Os01t0646300-01"/>
    <property type="gene ID" value="Os01g0646300"/>
</dbReference>
<dbReference type="Gramene" id="Os01t0646300-01">
    <property type="protein sequence ID" value="Os01t0646300-01"/>
    <property type="gene ID" value="Os01g0646300"/>
</dbReference>
<dbReference type="KEGG" id="dosa:Os01g0646300"/>
<dbReference type="eggNOG" id="ENOG502QPMG">
    <property type="taxonomic scope" value="Eukaryota"/>
</dbReference>
<dbReference type="HOGENOM" id="CLU_011924_0_3_1"/>
<dbReference type="InParanoid" id="B7F9I5"/>
<dbReference type="OMA" id="MTCAESV"/>
<dbReference type="OrthoDB" id="1869514at2759"/>
<dbReference type="Proteomes" id="UP000000763">
    <property type="component" value="Chromosome 1"/>
</dbReference>
<dbReference type="Proteomes" id="UP000059680">
    <property type="component" value="Chromosome 1"/>
</dbReference>
<dbReference type="GO" id="GO:0005634">
    <property type="term" value="C:nucleus"/>
    <property type="evidence" value="ECO:0000318"/>
    <property type="project" value="GO_Central"/>
</dbReference>
<dbReference type="GO" id="GO:0003700">
    <property type="term" value="F:DNA-binding transcription factor activity"/>
    <property type="evidence" value="ECO:0000318"/>
    <property type="project" value="GO_Central"/>
</dbReference>
<dbReference type="GO" id="GO:0043565">
    <property type="term" value="F:sequence-specific DNA binding"/>
    <property type="evidence" value="ECO:0000318"/>
    <property type="project" value="GO_Central"/>
</dbReference>
<dbReference type="GO" id="GO:0009740">
    <property type="term" value="P:gibberellic acid mediated signaling pathway"/>
    <property type="evidence" value="ECO:0000315"/>
    <property type="project" value="UniProtKB"/>
</dbReference>
<dbReference type="GO" id="GO:0006355">
    <property type="term" value="P:regulation of DNA-templated transcription"/>
    <property type="evidence" value="ECO:0000318"/>
    <property type="project" value="GO_Central"/>
</dbReference>
<dbReference type="InterPro" id="IPR005202">
    <property type="entry name" value="TF_GRAS"/>
</dbReference>
<dbReference type="PANTHER" id="PTHR31636">
    <property type="entry name" value="OSJNBA0084A10.13 PROTEIN-RELATED"/>
    <property type="match status" value="1"/>
</dbReference>
<dbReference type="Pfam" id="PF03514">
    <property type="entry name" value="GRAS"/>
    <property type="match status" value="1"/>
</dbReference>
<dbReference type="PROSITE" id="PS50985">
    <property type="entry name" value="GRAS"/>
    <property type="match status" value="1"/>
</dbReference>
<protein>
    <recommendedName>
        <fullName evidence="5">Protein SLENDER RICE1-LIKE 1</fullName>
        <shortName evidence="5">Protein SLR1-LIKE 1</shortName>
    </recommendedName>
</protein>
<gene>
    <name evidence="5" type="primary">SLRL1</name>
    <name evidence="9" type="ordered locus">Os01g0646300</name>
    <name evidence="6" type="ordered locus">LOC_Os01g45860</name>
    <name evidence="8" type="ORF">P0038D11.11</name>
    <name evidence="7" type="ORF">P0707D10.38</name>
</gene>
<name>SLRL1_ORYSJ</name>
<accession>B7F9I5</accession>
<accession>B9EYB5</accession>
<accession>Q6S5L6</accession>
<accession>Q9AS97</accession>
<evidence type="ECO:0000250" key="1">
    <source>
        <dbReference type="UniProtKB" id="Q7G7J6"/>
    </source>
</evidence>
<evidence type="ECO:0000255" key="2">
    <source>
        <dbReference type="PROSITE-ProRule" id="PRU01191"/>
    </source>
</evidence>
<evidence type="ECO:0000256" key="3">
    <source>
        <dbReference type="SAM" id="MobiDB-lite"/>
    </source>
</evidence>
<evidence type="ECO:0000269" key="4">
    <source>
    </source>
</evidence>
<evidence type="ECO:0000303" key="5">
    <source>
    </source>
</evidence>
<evidence type="ECO:0000305" key="6"/>
<evidence type="ECO:0000312" key="7">
    <source>
        <dbReference type="EMBL" id="BAB40172.1"/>
    </source>
</evidence>
<evidence type="ECO:0000312" key="8">
    <source>
        <dbReference type="EMBL" id="BAC05533.1"/>
    </source>
</evidence>
<evidence type="ECO:0000312" key="9">
    <source>
        <dbReference type="EMBL" id="BAS73406.1"/>
    </source>
</evidence>
<sequence length="495" mass="52067">MAMDTFPFQWPMDPAASSGLDAGFLPPPAAVAPDDGVGYYDPPAGADVDAAALPEFAAAFPPCAPDAAAAVLAMRREEEEVAGIRLVHLLMSCAGAIEAGDHALASAQLADSHAALAAVSAASGIGRVAVHFTTALSRRLFPSPVAPPTTDAEHAFLYHHFYEACPYLKFAHFTANQAILEAFHGCDHVHVIDFSLMQGLQWPALIQALALRPGGPPFLRITGIGPPSPTGRDELRDVGLRLADLARSVRVRFSFRGVAANSLDEVRPWMLQIAPGEAVAFNSVLQLHRLLGDPADQAPIDAVLDCVASVRPKIFTVIEQEADHNKTGFLDRFTEALFYYSAVFDSLDAASASGGAGNAMAEAYLQREICDIVCGEGAARRERHEPLSRWRDRLTRAGLSAVPLGSNALRQARMLVGLFSGEGHSVEEADGCLTLGWHGRPLFSASAWEAAGDGGGDNNNNSNSNVSGSSGSDSNNSGSSNGKSSGARDGSSVCL</sequence>
<keyword id="KW-0939">Gibberellin signaling pathway</keyword>
<keyword id="KW-0539">Nucleus</keyword>
<keyword id="KW-1185">Reference proteome</keyword>
<keyword id="KW-0678">Repressor</keyword>
<keyword id="KW-0804">Transcription</keyword>
<keyword id="KW-0805">Transcription regulation</keyword>
<comment type="function">
    <text evidence="4">Probable transcriptional regulator that acts as a repressor of the gibberellin (GA) signaling pathway (PubMed:16262715). Its repressive activity is weaker than that of SLR1 (PubMed:16262715). Its overexpression prevents the GA signaling pathway and induces a dwarf phenotype (PubMed:16262715).</text>
</comment>
<comment type="subcellular location">
    <subcellularLocation>
        <location evidence="1">Nucleus</location>
    </subcellularLocation>
</comment>
<comment type="tissue specificity">
    <text evidence="4">Expressed in elongating internodes and flowers (PubMed:16262715). Expressed in floral meristem, stamen primordia and tapetum in developing anthers (PubMed:16262715). Expressed at low levels in roots, shoot apices and rachis (PubMed:16262715).</text>
</comment>
<comment type="induction">
    <text evidence="4">Induced by treatment with gibberellin (GA3).</text>
</comment>
<comment type="similarity">
    <text evidence="2">Belongs to the GRAS family.</text>
</comment>
<comment type="sequence caution" evidence="6">
    <conflict type="erroneous initiation">
        <sequence resource="EMBL-CDS" id="AAR31213"/>
    </conflict>
    <text>Truncated N-terminus.</text>
</comment>
<comment type="sequence caution" evidence="6">
    <conflict type="erroneous initiation">
        <sequence resource="EMBL-CDS" id="BAB40172"/>
    </conflict>
    <text>Truncated N-terminus.</text>
</comment>
<comment type="sequence caution" evidence="6">
    <conflict type="erroneous initiation">
        <sequence resource="EMBL-CDS" id="BAC05533"/>
    </conflict>
    <text>Truncated N-terminus.</text>
</comment>
<comment type="sequence caution" evidence="6">
    <conflict type="erroneous initiation">
        <sequence resource="EMBL-CDS" id="BAF05619"/>
    </conflict>
    <text>Truncated N-terminus.</text>
</comment>
<proteinExistence type="evidence at transcript level"/>
<organism>
    <name type="scientific">Oryza sativa subsp. japonica</name>
    <name type="common">Rice</name>
    <dbReference type="NCBI Taxonomy" id="39947"/>
    <lineage>
        <taxon>Eukaryota</taxon>
        <taxon>Viridiplantae</taxon>
        <taxon>Streptophyta</taxon>
        <taxon>Embryophyta</taxon>
        <taxon>Tracheophyta</taxon>
        <taxon>Spermatophyta</taxon>
        <taxon>Magnoliopsida</taxon>
        <taxon>Liliopsida</taxon>
        <taxon>Poales</taxon>
        <taxon>Poaceae</taxon>
        <taxon>BOP clade</taxon>
        <taxon>Oryzoideae</taxon>
        <taxon>Oryzeae</taxon>
        <taxon>Oryzinae</taxon>
        <taxon>Oryza</taxon>
        <taxon>Oryza sativa</taxon>
    </lineage>
</organism>
<feature type="chain" id="PRO_0000455645" description="Protein SLENDER RICE1-LIKE 1">
    <location>
        <begin position="1"/>
        <end position="495"/>
    </location>
</feature>
<feature type="domain" description="GRAS" evidence="2">
    <location>
        <begin position="77"/>
        <end position="449"/>
    </location>
</feature>
<feature type="region of interest" description="Leucine repeat I (LRI)" evidence="2">
    <location>
        <begin position="84"/>
        <end position="140"/>
    </location>
</feature>
<feature type="region of interest" description="VHIID" evidence="2">
    <location>
        <begin position="158"/>
        <end position="223"/>
    </location>
</feature>
<feature type="region of interest" description="Leucine repeat II (LRII)" evidence="2">
    <location>
        <begin position="237"/>
        <end position="269"/>
    </location>
</feature>
<feature type="region of interest" description="PFYRE" evidence="2">
    <location>
        <begin position="279"/>
        <end position="371"/>
    </location>
</feature>
<feature type="region of interest" description="SAW" evidence="2">
    <location>
        <begin position="374"/>
        <end position="449"/>
    </location>
</feature>
<feature type="region of interest" description="Disordered" evidence="3">
    <location>
        <begin position="451"/>
        <end position="495"/>
    </location>
</feature>
<feature type="short sequence motif" description="VHIID" evidence="2">
    <location>
        <begin position="189"/>
        <end position="193"/>
    </location>
</feature>
<feature type="short sequence motif" description="LXXLL motif" evidence="2">
    <location>
        <begin position="287"/>
        <end position="291"/>
    </location>
</feature>
<feature type="compositionally biased region" description="Low complexity" evidence="3">
    <location>
        <begin position="458"/>
        <end position="485"/>
    </location>
</feature>
<feature type="sequence conflict" description="In Ref. 1; AAR31213." evidence="6" ref="1">
    <original>E</original>
    <variation>A</variation>
    <location>
        <position position="78"/>
    </location>
</feature>